<protein>
    <recommendedName>
        <fullName>Interleukin-17D</fullName>
        <shortName>IL-17D</shortName>
    </recommendedName>
    <alternativeName>
        <fullName evidence="4">Interleukin-27</fullName>
        <shortName evidence="4">IL-27</shortName>
    </alternativeName>
</protein>
<keyword id="KW-0202">Cytokine</keyword>
<keyword id="KW-0325">Glycoprotein</keyword>
<keyword id="KW-1267">Proteomics identification</keyword>
<keyword id="KW-1185">Reference proteome</keyword>
<keyword id="KW-0964">Secreted</keyword>
<keyword id="KW-0732">Signal</keyword>
<comment type="function">
    <text evidence="3">Induces expression of IL6, CXCL8/IL8, and CSF2/GM-CSF from endothelial cells.</text>
</comment>
<comment type="subcellular location">
    <subcellularLocation>
        <location>Secreted</location>
    </subcellularLocation>
</comment>
<comment type="tissue specificity">
    <text evidence="3">Expressed preferentially in adipose, skeletal muscle and CNS.</text>
</comment>
<comment type="similarity">
    <text evidence="5">Belongs to the IL-17 family.</text>
</comment>
<comment type="caution">
    <text evidence="6">IL17D nucleotide sequence has been submitted under the name IL27 in INSDC AY078238 (Ref.2). However, the protein shown in this entry should not be confused with the actual IL27 protein, which forms a heterodimeric cytokine by interaction with EBI3. In order to avoid any ambiguity, we strongly recommend using the official HGNC nomenclature.</text>
</comment>
<comment type="online information" name="Wikipedia">
    <link uri="https://en.wikipedia.org/wiki/Interleukin_17"/>
    <text>Interleukin-17 entry</text>
</comment>
<proteinExistence type="evidence at protein level"/>
<dbReference type="EMBL" id="AY078238">
    <property type="protein sequence ID" value="AAL86911.1"/>
    <property type="molecule type" value="mRNA"/>
</dbReference>
<dbReference type="EMBL" id="AF479775">
    <property type="protein sequence ID" value="AAM12734.1"/>
    <property type="molecule type" value="mRNA"/>
</dbReference>
<dbReference type="EMBL" id="AF458062">
    <property type="protein sequence ID" value="AAM77566.1"/>
    <property type="molecule type" value="mRNA"/>
</dbReference>
<dbReference type="EMBL" id="AY359113">
    <property type="protein sequence ID" value="AAQ89471.1"/>
    <property type="molecule type" value="mRNA"/>
</dbReference>
<dbReference type="EMBL" id="AL161772">
    <property type="status" value="NOT_ANNOTATED_CDS"/>
    <property type="molecule type" value="Genomic_DNA"/>
</dbReference>
<dbReference type="EMBL" id="AL512652">
    <property type="status" value="NOT_ANNOTATED_CDS"/>
    <property type="molecule type" value="Genomic_DNA"/>
</dbReference>
<dbReference type="EMBL" id="CH471075">
    <property type="protein sequence ID" value="EAX08276.1"/>
    <property type="molecule type" value="Genomic_DNA"/>
</dbReference>
<dbReference type="EMBL" id="BC036243">
    <property type="protein sequence ID" value="AAH36243.1"/>
    <property type="molecule type" value="mRNA"/>
</dbReference>
<dbReference type="CCDS" id="CCDS9292.1"/>
<dbReference type="RefSeq" id="NP_001372152.1">
    <property type="nucleotide sequence ID" value="NM_001385223.1"/>
</dbReference>
<dbReference type="RefSeq" id="NP_001372153.1">
    <property type="nucleotide sequence ID" value="NM_001385224.1"/>
</dbReference>
<dbReference type="RefSeq" id="NP_612141.1">
    <property type="nucleotide sequence ID" value="NM_138284.2"/>
</dbReference>
<dbReference type="SMR" id="Q8TAD2"/>
<dbReference type="BioGRID" id="119743">
    <property type="interactions" value="109"/>
</dbReference>
<dbReference type="FunCoup" id="Q8TAD2">
    <property type="interactions" value="599"/>
</dbReference>
<dbReference type="IntAct" id="Q8TAD2">
    <property type="interactions" value="3"/>
</dbReference>
<dbReference type="MINT" id="Q8TAD2"/>
<dbReference type="STRING" id="9606.ENSP00000302924"/>
<dbReference type="GlyCosmos" id="Q8TAD2">
    <property type="glycosylation" value="2 sites, No reported glycans"/>
</dbReference>
<dbReference type="GlyGen" id="Q8TAD2">
    <property type="glycosylation" value="2 sites, 1 N-linked glycan (1 site)"/>
</dbReference>
<dbReference type="iPTMnet" id="Q8TAD2"/>
<dbReference type="PhosphoSitePlus" id="Q8TAD2"/>
<dbReference type="BioMuta" id="IL17D"/>
<dbReference type="DMDM" id="46576614"/>
<dbReference type="MassIVE" id="Q8TAD2"/>
<dbReference type="PaxDb" id="9606-ENSP00000302924"/>
<dbReference type="PeptideAtlas" id="Q8TAD2"/>
<dbReference type="ProteomicsDB" id="73860"/>
<dbReference type="Antibodypedia" id="22328">
    <property type="antibodies" value="449 antibodies from 31 providers"/>
</dbReference>
<dbReference type="DNASU" id="53342"/>
<dbReference type="Ensembl" id="ENST00000304920.3">
    <property type="protein sequence ID" value="ENSP00000302924.3"/>
    <property type="gene ID" value="ENSG00000172458.5"/>
</dbReference>
<dbReference type="Ensembl" id="ENST00000682841.1">
    <property type="protein sequence ID" value="ENSP00000508385.1"/>
    <property type="gene ID" value="ENSG00000172458.5"/>
</dbReference>
<dbReference type="GeneID" id="53342"/>
<dbReference type="KEGG" id="hsa:53342"/>
<dbReference type="MANE-Select" id="ENST00000682841.1">
    <property type="protein sequence ID" value="ENSP00000508385.1"/>
    <property type="RefSeq nucleotide sequence ID" value="NM_001385224.1"/>
    <property type="RefSeq protein sequence ID" value="NP_001372153.1"/>
</dbReference>
<dbReference type="UCSC" id="uc001unm.3">
    <property type="organism name" value="human"/>
</dbReference>
<dbReference type="AGR" id="HGNC:5984"/>
<dbReference type="CTD" id="53342"/>
<dbReference type="DisGeNET" id="53342"/>
<dbReference type="GeneCards" id="IL17D"/>
<dbReference type="HGNC" id="HGNC:5984">
    <property type="gene designation" value="IL17D"/>
</dbReference>
<dbReference type="HPA" id="ENSG00000172458">
    <property type="expression patterns" value="Group enriched (brain, skeletal muscle)"/>
</dbReference>
<dbReference type="MIM" id="607587">
    <property type="type" value="gene"/>
</dbReference>
<dbReference type="neXtProt" id="NX_Q8TAD2"/>
<dbReference type="OpenTargets" id="ENSG00000172458"/>
<dbReference type="PharmGKB" id="PA29798"/>
<dbReference type="VEuPathDB" id="HostDB:ENSG00000172458"/>
<dbReference type="eggNOG" id="ENOG502RXIG">
    <property type="taxonomic scope" value="Eukaryota"/>
</dbReference>
<dbReference type="GeneTree" id="ENSGT00940000161739"/>
<dbReference type="HOGENOM" id="CLU_100619_0_0_1"/>
<dbReference type="InParanoid" id="Q8TAD2"/>
<dbReference type="OMA" id="KGCLTGP"/>
<dbReference type="OrthoDB" id="9858224at2759"/>
<dbReference type="PAN-GO" id="Q8TAD2">
    <property type="GO annotations" value="3 GO annotations based on evolutionary models"/>
</dbReference>
<dbReference type="PhylomeDB" id="Q8TAD2"/>
<dbReference type="TreeFam" id="TF314701"/>
<dbReference type="PathwayCommons" id="Q8TAD2"/>
<dbReference type="SignaLink" id="Q8TAD2"/>
<dbReference type="BioGRID-ORCS" id="53342">
    <property type="hits" value="20 hits in 1144 CRISPR screens"/>
</dbReference>
<dbReference type="ChiTaRS" id="IL17D">
    <property type="organism name" value="human"/>
</dbReference>
<dbReference type="GenomeRNAi" id="53342"/>
<dbReference type="Pharos" id="Q8TAD2">
    <property type="development level" value="Tbio"/>
</dbReference>
<dbReference type="PRO" id="PR:Q8TAD2"/>
<dbReference type="Proteomes" id="UP000005640">
    <property type="component" value="Chromosome 13"/>
</dbReference>
<dbReference type="RNAct" id="Q8TAD2">
    <property type="molecule type" value="protein"/>
</dbReference>
<dbReference type="Bgee" id="ENSG00000172458">
    <property type="expression patterns" value="Expressed in vastus lateralis and 145 other cell types or tissues"/>
</dbReference>
<dbReference type="ExpressionAtlas" id="Q8TAD2">
    <property type="expression patterns" value="baseline and differential"/>
</dbReference>
<dbReference type="GO" id="GO:0005615">
    <property type="term" value="C:extracellular space"/>
    <property type="evidence" value="ECO:0000314"/>
    <property type="project" value="UniProtKB"/>
</dbReference>
<dbReference type="GO" id="GO:0005125">
    <property type="term" value="F:cytokine activity"/>
    <property type="evidence" value="ECO:0000314"/>
    <property type="project" value="UniProtKB"/>
</dbReference>
<dbReference type="GO" id="GO:0042803">
    <property type="term" value="F:protein homodimerization activity"/>
    <property type="evidence" value="ECO:0000314"/>
    <property type="project" value="UniProtKB"/>
</dbReference>
<dbReference type="GO" id="GO:0048018">
    <property type="term" value="F:receptor ligand activity"/>
    <property type="evidence" value="ECO:0000314"/>
    <property type="project" value="UniProtKB"/>
</dbReference>
<dbReference type="GO" id="GO:0006954">
    <property type="term" value="P:inflammatory response"/>
    <property type="evidence" value="ECO:0000314"/>
    <property type="project" value="UniProtKB"/>
</dbReference>
<dbReference type="GO" id="GO:1903707">
    <property type="term" value="P:negative regulation of hemopoiesis"/>
    <property type="evidence" value="ECO:0000314"/>
    <property type="project" value="UniProtKB"/>
</dbReference>
<dbReference type="GO" id="GO:1900017">
    <property type="term" value="P:positive regulation of cytokine production involved in inflammatory response"/>
    <property type="evidence" value="ECO:0000314"/>
    <property type="project" value="UniProtKB"/>
</dbReference>
<dbReference type="GO" id="GO:0032725">
    <property type="term" value="P:positive regulation of granulocyte macrophage colony-stimulating factor production"/>
    <property type="evidence" value="ECO:0000314"/>
    <property type="project" value="UniProtKB"/>
</dbReference>
<dbReference type="GO" id="GO:0032755">
    <property type="term" value="P:positive regulation of interleukin-6 production"/>
    <property type="evidence" value="ECO:0000314"/>
    <property type="project" value="UniProtKB"/>
</dbReference>
<dbReference type="GO" id="GO:0032757">
    <property type="term" value="P:positive regulation of interleukin-8 production"/>
    <property type="evidence" value="ECO:0000314"/>
    <property type="project" value="UniProtKB"/>
</dbReference>
<dbReference type="FunFam" id="2.10.90.10:FF:000044">
    <property type="entry name" value="Interleukin 17D"/>
    <property type="match status" value="1"/>
</dbReference>
<dbReference type="Gene3D" id="2.10.90.10">
    <property type="entry name" value="Cystine-knot cytokines"/>
    <property type="match status" value="1"/>
</dbReference>
<dbReference type="InterPro" id="IPR029034">
    <property type="entry name" value="Cystine-knot_cytokine"/>
</dbReference>
<dbReference type="InterPro" id="IPR020440">
    <property type="entry name" value="IL-17_chr"/>
</dbReference>
<dbReference type="InterPro" id="IPR010345">
    <property type="entry name" value="IL-17_fam"/>
</dbReference>
<dbReference type="Pfam" id="PF06083">
    <property type="entry name" value="IL17"/>
    <property type="match status" value="1"/>
</dbReference>
<dbReference type="PRINTS" id="PR01932">
    <property type="entry name" value="INTRLEUKIN17"/>
</dbReference>
<dbReference type="SUPFAM" id="SSF57501">
    <property type="entry name" value="Cystine-knot cytokines"/>
    <property type="match status" value="1"/>
</dbReference>
<sequence>MLVAGFLLALPPSWAAGAPRAGRRPARPRGCADRPEELLEQLYGRLAAGVLSAFHHTLQLGPREQARNASCPAGGRPADRRFRPPTNLRSVSPWAYRISYDPARYPRYLPEAYCLCRGCLTGLFGEEDVRFRSAPVYMPTVVLRRTPACAGGRSVYTEAYVTIPVGCTCVPEPEKDADSINSSIDKQGAKLLLGPNDAPAGP</sequence>
<gene>
    <name type="primary">IL17D</name>
    <name type="ORF">UNQ3096/PRO21175</name>
</gene>
<accession>Q8TAD2</accession>
<accession>B1AM69</accession>
<evidence type="ECO:0000255" key="1"/>
<evidence type="ECO:0000256" key="2">
    <source>
        <dbReference type="SAM" id="MobiDB-lite"/>
    </source>
</evidence>
<evidence type="ECO:0000269" key="3">
    <source>
    </source>
</evidence>
<evidence type="ECO:0000303" key="4">
    <source ref="2"/>
</evidence>
<evidence type="ECO:0000305" key="5"/>
<evidence type="ECO:0000305" key="6">
    <source ref="2"/>
</evidence>
<feature type="signal peptide" evidence="1">
    <location>
        <begin position="1"/>
        <end position="15"/>
    </location>
</feature>
<feature type="chain" id="PRO_0000015430" description="Interleukin-17D">
    <location>
        <begin position="16"/>
        <end position="202"/>
    </location>
</feature>
<feature type="region of interest" description="Disordered" evidence="2">
    <location>
        <begin position="65"/>
        <end position="85"/>
    </location>
</feature>
<feature type="glycosylation site" description="N-linked (GlcNAc...) asparagine" evidence="1">
    <location>
        <position position="68"/>
    </location>
</feature>
<feature type="glycosylation site" description="N-linked (GlcNAc...) asparagine" evidence="1">
    <location>
        <position position="181"/>
    </location>
</feature>
<feature type="sequence conflict" description="In Ref. 4; AAQ89471." evidence="5" ref="4">
    <original>A</original>
    <variation>G</variation>
    <location>
        <position position="78"/>
    </location>
</feature>
<organism>
    <name type="scientific">Homo sapiens</name>
    <name type="common">Human</name>
    <dbReference type="NCBI Taxonomy" id="9606"/>
    <lineage>
        <taxon>Eukaryota</taxon>
        <taxon>Metazoa</taxon>
        <taxon>Chordata</taxon>
        <taxon>Craniata</taxon>
        <taxon>Vertebrata</taxon>
        <taxon>Euteleostomi</taxon>
        <taxon>Mammalia</taxon>
        <taxon>Eutheria</taxon>
        <taxon>Euarchontoglires</taxon>
        <taxon>Primates</taxon>
        <taxon>Haplorrhini</taxon>
        <taxon>Catarrhini</taxon>
        <taxon>Hominidae</taxon>
        <taxon>Homo</taxon>
    </lineage>
</organism>
<name>IL17D_HUMAN</name>
<reference key="1">
    <citation type="journal article" date="2002" name="J. Immunol.">
        <title>Cutting edge: IL-17D, a novel member of the IL-17 family, stimulates cytokine production and inhibits hemopoiesis.</title>
        <authorList>
            <person name="Starnes T."/>
            <person name="Broxmeyer H.E."/>
            <person name="Robertson M.J."/>
            <person name="Hromas R."/>
        </authorList>
    </citation>
    <scope>NUCLEOTIDE SEQUENCE [MRNA]</scope>
    <scope>FUNCTION</scope>
    <scope>TISSUE SPECIFICITY</scope>
</reference>
<reference key="2">
    <citation type="submission" date="2002-02" db="EMBL/GenBank/DDBJ databases">
        <title>Interleukin 27 (IL27): a newly identified cytokine.</title>
        <authorList>
            <person name="Hadj-Slimane R."/>
            <person name="Bobe P."/>
        </authorList>
    </citation>
    <scope>NUCLEOTIDE SEQUENCE [MRNA]</scope>
    <source>
        <tissue>Brain</tissue>
    </source>
</reference>
<reference key="3">
    <citation type="submission" date="2001-12" db="EMBL/GenBank/DDBJ databases">
        <authorList>
            <person name="Gilbert J.M."/>
            <person name="Gorman D.M."/>
        </authorList>
    </citation>
    <scope>NUCLEOTIDE SEQUENCE [MRNA]</scope>
</reference>
<reference key="4">
    <citation type="journal article" date="2003" name="Genome Res.">
        <title>The secreted protein discovery initiative (SPDI), a large-scale effort to identify novel human secreted and transmembrane proteins: a bioinformatics assessment.</title>
        <authorList>
            <person name="Clark H.F."/>
            <person name="Gurney A.L."/>
            <person name="Abaya E."/>
            <person name="Baker K."/>
            <person name="Baldwin D.T."/>
            <person name="Brush J."/>
            <person name="Chen J."/>
            <person name="Chow B."/>
            <person name="Chui C."/>
            <person name="Crowley C."/>
            <person name="Currell B."/>
            <person name="Deuel B."/>
            <person name="Dowd P."/>
            <person name="Eaton D."/>
            <person name="Foster J.S."/>
            <person name="Grimaldi C."/>
            <person name="Gu Q."/>
            <person name="Hass P.E."/>
            <person name="Heldens S."/>
            <person name="Huang A."/>
            <person name="Kim H.S."/>
            <person name="Klimowski L."/>
            <person name="Jin Y."/>
            <person name="Johnson S."/>
            <person name="Lee J."/>
            <person name="Lewis L."/>
            <person name="Liao D."/>
            <person name="Mark M.R."/>
            <person name="Robbie E."/>
            <person name="Sanchez C."/>
            <person name="Schoenfeld J."/>
            <person name="Seshagiri S."/>
            <person name="Simmons L."/>
            <person name="Singh J."/>
            <person name="Smith V."/>
            <person name="Stinson J."/>
            <person name="Vagts A."/>
            <person name="Vandlen R.L."/>
            <person name="Watanabe C."/>
            <person name="Wieand D."/>
            <person name="Woods K."/>
            <person name="Xie M.-H."/>
            <person name="Yansura D.G."/>
            <person name="Yi S."/>
            <person name="Yu G."/>
            <person name="Yuan J."/>
            <person name="Zhang M."/>
            <person name="Zhang Z."/>
            <person name="Goddard A.D."/>
            <person name="Wood W.I."/>
            <person name="Godowski P.J."/>
            <person name="Gray A.M."/>
        </authorList>
    </citation>
    <scope>NUCLEOTIDE SEQUENCE [LARGE SCALE MRNA]</scope>
</reference>
<reference key="5">
    <citation type="journal article" date="2004" name="Nature">
        <title>The DNA sequence and analysis of human chromosome 13.</title>
        <authorList>
            <person name="Dunham A."/>
            <person name="Matthews L.H."/>
            <person name="Burton J."/>
            <person name="Ashurst J.L."/>
            <person name="Howe K.L."/>
            <person name="Ashcroft K.J."/>
            <person name="Beare D.M."/>
            <person name="Burford D.C."/>
            <person name="Hunt S.E."/>
            <person name="Griffiths-Jones S."/>
            <person name="Jones M.C."/>
            <person name="Keenan S.J."/>
            <person name="Oliver K."/>
            <person name="Scott C.E."/>
            <person name="Ainscough R."/>
            <person name="Almeida J.P."/>
            <person name="Ambrose K.D."/>
            <person name="Andrews D.T."/>
            <person name="Ashwell R.I.S."/>
            <person name="Babbage A.K."/>
            <person name="Bagguley C.L."/>
            <person name="Bailey J."/>
            <person name="Bannerjee R."/>
            <person name="Barlow K.F."/>
            <person name="Bates K."/>
            <person name="Beasley H."/>
            <person name="Bird C.P."/>
            <person name="Bray-Allen S."/>
            <person name="Brown A.J."/>
            <person name="Brown J.Y."/>
            <person name="Burrill W."/>
            <person name="Carder C."/>
            <person name="Carter N.P."/>
            <person name="Chapman J.C."/>
            <person name="Clamp M.E."/>
            <person name="Clark S.Y."/>
            <person name="Clarke G."/>
            <person name="Clee C.M."/>
            <person name="Clegg S.C."/>
            <person name="Cobley V."/>
            <person name="Collins J.E."/>
            <person name="Corby N."/>
            <person name="Coville G.J."/>
            <person name="Deloukas P."/>
            <person name="Dhami P."/>
            <person name="Dunham I."/>
            <person name="Dunn M."/>
            <person name="Earthrowl M.E."/>
            <person name="Ellington A.G."/>
            <person name="Faulkner L."/>
            <person name="Frankish A.G."/>
            <person name="Frankland J."/>
            <person name="French L."/>
            <person name="Garner P."/>
            <person name="Garnett J."/>
            <person name="Gilbert J.G.R."/>
            <person name="Gilson C.J."/>
            <person name="Ghori J."/>
            <person name="Grafham D.V."/>
            <person name="Gribble S.M."/>
            <person name="Griffiths C."/>
            <person name="Hall R.E."/>
            <person name="Hammond S."/>
            <person name="Harley J.L."/>
            <person name="Hart E.A."/>
            <person name="Heath P.D."/>
            <person name="Howden P.J."/>
            <person name="Huckle E.J."/>
            <person name="Hunt P.J."/>
            <person name="Hunt A.R."/>
            <person name="Johnson C."/>
            <person name="Johnson D."/>
            <person name="Kay M."/>
            <person name="Kimberley A.M."/>
            <person name="King A."/>
            <person name="Laird G.K."/>
            <person name="Langford C.J."/>
            <person name="Lawlor S."/>
            <person name="Leongamornlert D.A."/>
            <person name="Lloyd D.M."/>
            <person name="Lloyd C."/>
            <person name="Loveland J.E."/>
            <person name="Lovell J."/>
            <person name="Martin S."/>
            <person name="Mashreghi-Mohammadi M."/>
            <person name="McLaren S.J."/>
            <person name="McMurray A."/>
            <person name="Milne S."/>
            <person name="Moore M.J.F."/>
            <person name="Nickerson T."/>
            <person name="Palmer S.A."/>
            <person name="Pearce A.V."/>
            <person name="Peck A.I."/>
            <person name="Pelan S."/>
            <person name="Phillimore B."/>
            <person name="Porter K.M."/>
            <person name="Rice C.M."/>
            <person name="Searle S."/>
            <person name="Sehra H.K."/>
            <person name="Shownkeen R."/>
            <person name="Skuce C.D."/>
            <person name="Smith M."/>
            <person name="Steward C.A."/>
            <person name="Sycamore N."/>
            <person name="Tester J."/>
            <person name="Thomas D.W."/>
            <person name="Tracey A."/>
            <person name="Tromans A."/>
            <person name="Tubby B."/>
            <person name="Wall M."/>
            <person name="Wallis J.M."/>
            <person name="West A.P."/>
            <person name="Whitehead S.L."/>
            <person name="Willey D.L."/>
            <person name="Wilming L."/>
            <person name="Wray P.W."/>
            <person name="Wright M.W."/>
            <person name="Young L."/>
            <person name="Coulson A."/>
            <person name="Durbin R.M."/>
            <person name="Hubbard T."/>
            <person name="Sulston J.E."/>
            <person name="Beck S."/>
            <person name="Bentley D.R."/>
            <person name="Rogers J."/>
            <person name="Ross M.T."/>
        </authorList>
    </citation>
    <scope>NUCLEOTIDE SEQUENCE [LARGE SCALE GENOMIC DNA]</scope>
</reference>
<reference key="6">
    <citation type="submission" date="2005-07" db="EMBL/GenBank/DDBJ databases">
        <authorList>
            <person name="Mural R.J."/>
            <person name="Istrail S."/>
            <person name="Sutton G.G."/>
            <person name="Florea L."/>
            <person name="Halpern A.L."/>
            <person name="Mobarry C.M."/>
            <person name="Lippert R."/>
            <person name="Walenz B."/>
            <person name="Shatkay H."/>
            <person name="Dew I."/>
            <person name="Miller J.R."/>
            <person name="Flanigan M.J."/>
            <person name="Edwards N.J."/>
            <person name="Bolanos R."/>
            <person name="Fasulo D."/>
            <person name="Halldorsson B.V."/>
            <person name="Hannenhalli S."/>
            <person name="Turner R."/>
            <person name="Yooseph S."/>
            <person name="Lu F."/>
            <person name="Nusskern D.R."/>
            <person name="Shue B.C."/>
            <person name="Zheng X.H."/>
            <person name="Zhong F."/>
            <person name="Delcher A.L."/>
            <person name="Huson D.H."/>
            <person name="Kravitz S.A."/>
            <person name="Mouchard L."/>
            <person name="Reinert K."/>
            <person name="Remington K.A."/>
            <person name="Clark A.G."/>
            <person name="Waterman M.S."/>
            <person name="Eichler E.E."/>
            <person name="Adams M.D."/>
            <person name="Hunkapiller M.W."/>
            <person name="Myers E.W."/>
            <person name="Venter J.C."/>
        </authorList>
    </citation>
    <scope>NUCLEOTIDE SEQUENCE [LARGE SCALE GENOMIC DNA]</scope>
</reference>
<reference key="7">
    <citation type="journal article" date="2004" name="Genome Res.">
        <title>The status, quality, and expansion of the NIH full-length cDNA project: the Mammalian Gene Collection (MGC).</title>
        <authorList>
            <consortium name="The MGC Project Team"/>
        </authorList>
    </citation>
    <scope>NUCLEOTIDE SEQUENCE [LARGE SCALE MRNA]</scope>
    <source>
        <tissue>Brain</tissue>
    </source>
</reference>